<evidence type="ECO:0000250" key="1"/>
<evidence type="ECO:0000250" key="2">
    <source>
        <dbReference type="UniProtKB" id="P00157"/>
    </source>
</evidence>
<evidence type="ECO:0000255" key="3">
    <source>
        <dbReference type="PROSITE-ProRule" id="PRU00967"/>
    </source>
</evidence>
<evidence type="ECO:0000255" key="4">
    <source>
        <dbReference type="PROSITE-ProRule" id="PRU00968"/>
    </source>
</evidence>
<comment type="function">
    <text evidence="2">Component of the ubiquinol-cytochrome c reductase complex (complex III or cytochrome b-c1 complex) that is part of the mitochondrial respiratory chain. The b-c1 complex mediates electron transfer from ubiquinol to cytochrome c. Contributes to the generation of a proton gradient across the mitochondrial membrane that is then used for ATP synthesis.</text>
</comment>
<comment type="cofactor">
    <cofactor evidence="2">
        <name>heme b</name>
        <dbReference type="ChEBI" id="CHEBI:60344"/>
    </cofactor>
    <text evidence="2">Binds 2 heme b groups non-covalently.</text>
</comment>
<comment type="subunit">
    <text evidence="2">The cytochrome bc1 complex contains 11 subunits: 3 respiratory subunits (MT-CYB, CYC1 and UQCRFS1), 2 core proteins (UQCRC1 and UQCRC2) and 6 low-molecular weight proteins (UQCRH/QCR6, UQCRB/QCR7, UQCRQ/QCR8, UQCR10/QCR9, UQCR11/QCR10 and a cleavage product of UQCRFS1). This cytochrome bc1 complex then forms a dimer.</text>
</comment>
<comment type="subcellular location">
    <subcellularLocation>
        <location evidence="2">Mitochondrion inner membrane</location>
        <topology evidence="2">Multi-pass membrane protein</topology>
    </subcellularLocation>
</comment>
<comment type="miscellaneous">
    <text evidence="1">Heme 1 (or BL or b562) is low-potential and absorbs at about 562 nm, and heme 2 (or BH or b566) is high-potential and absorbs at about 566 nm.</text>
</comment>
<comment type="similarity">
    <text evidence="3 4">Belongs to the cytochrome b family.</text>
</comment>
<comment type="caution">
    <text evidence="2">The full-length protein contains only eight transmembrane helices, not nine as predicted by bioinformatics tools.</text>
</comment>
<proteinExistence type="inferred from homology"/>
<accession>Q6ELW3</accession>
<dbReference type="EMBL" id="AY292721">
    <property type="protein sequence ID" value="AAS54917.1"/>
    <property type="molecule type" value="Genomic_DNA"/>
</dbReference>
<dbReference type="SMR" id="Q6ELW3"/>
<dbReference type="GO" id="GO:0005743">
    <property type="term" value="C:mitochondrial inner membrane"/>
    <property type="evidence" value="ECO:0007669"/>
    <property type="project" value="UniProtKB-SubCell"/>
</dbReference>
<dbReference type="GO" id="GO:0045275">
    <property type="term" value="C:respiratory chain complex III"/>
    <property type="evidence" value="ECO:0007669"/>
    <property type="project" value="InterPro"/>
</dbReference>
<dbReference type="GO" id="GO:0046872">
    <property type="term" value="F:metal ion binding"/>
    <property type="evidence" value="ECO:0007669"/>
    <property type="project" value="UniProtKB-KW"/>
</dbReference>
<dbReference type="GO" id="GO:0008121">
    <property type="term" value="F:ubiquinol-cytochrome-c reductase activity"/>
    <property type="evidence" value="ECO:0007669"/>
    <property type="project" value="InterPro"/>
</dbReference>
<dbReference type="GO" id="GO:0006122">
    <property type="term" value="P:mitochondrial electron transport, ubiquinol to cytochrome c"/>
    <property type="evidence" value="ECO:0007669"/>
    <property type="project" value="TreeGrafter"/>
</dbReference>
<dbReference type="CDD" id="cd00290">
    <property type="entry name" value="cytochrome_b_C"/>
    <property type="match status" value="1"/>
</dbReference>
<dbReference type="CDD" id="cd00284">
    <property type="entry name" value="Cytochrome_b_N"/>
    <property type="match status" value="1"/>
</dbReference>
<dbReference type="FunFam" id="1.20.810.10:FF:000002">
    <property type="entry name" value="Cytochrome b"/>
    <property type="match status" value="1"/>
</dbReference>
<dbReference type="Gene3D" id="1.20.810.10">
    <property type="entry name" value="Cytochrome Bc1 Complex, Chain C"/>
    <property type="match status" value="1"/>
</dbReference>
<dbReference type="InterPro" id="IPR005798">
    <property type="entry name" value="Cyt_b/b6_C"/>
</dbReference>
<dbReference type="InterPro" id="IPR036150">
    <property type="entry name" value="Cyt_b/b6_C_sf"/>
</dbReference>
<dbReference type="InterPro" id="IPR005797">
    <property type="entry name" value="Cyt_b/b6_N"/>
</dbReference>
<dbReference type="InterPro" id="IPR027387">
    <property type="entry name" value="Cytb/b6-like_sf"/>
</dbReference>
<dbReference type="InterPro" id="IPR030689">
    <property type="entry name" value="Cytochrome_b"/>
</dbReference>
<dbReference type="InterPro" id="IPR048260">
    <property type="entry name" value="Cytochrome_b_C_euk/bac"/>
</dbReference>
<dbReference type="InterPro" id="IPR048259">
    <property type="entry name" value="Cytochrome_b_N_euk/bac"/>
</dbReference>
<dbReference type="InterPro" id="IPR016174">
    <property type="entry name" value="Di-haem_cyt_TM"/>
</dbReference>
<dbReference type="PANTHER" id="PTHR19271">
    <property type="entry name" value="CYTOCHROME B"/>
    <property type="match status" value="1"/>
</dbReference>
<dbReference type="PANTHER" id="PTHR19271:SF16">
    <property type="entry name" value="CYTOCHROME B"/>
    <property type="match status" value="1"/>
</dbReference>
<dbReference type="Pfam" id="PF00032">
    <property type="entry name" value="Cytochrom_B_C"/>
    <property type="match status" value="1"/>
</dbReference>
<dbReference type="Pfam" id="PF00033">
    <property type="entry name" value="Cytochrome_B"/>
    <property type="match status" value="1"/>
</dbReference>
<dbReference type="PIRSF" id="PIRSF038885">
    <property type="entry name" value="COB"/>
    <property type="match status" value="1"/>
</dbReference>
<dbReference type="SUPFAM" id="SSF81648">
    <property type="entry name" value="a domain/subunit of cytochrome bc1 complex (Ubiquinol-cytochrome c reductase)"/>
    <property type="match status" value="1"/>
</dbReference>
<dbReference type="SUPFAM" id="SSF81342">
    <property type="entry name" value="Transmembrane di-heme cytochromes"/>
    <property type="match status" value="1"/>
</dbReference>
<dbReference type="PROSITE" id="PS51003">
    <property type="entry name" value="CYTB_CTER"/>
    <property type="match status" value="1"/>
</dbReference>
<dbReference type="PROSITE" id="PS51002">
    <property type="entry name" value="CYTB_NTER"/>
    <property type="match status" value="1"/>
</dbReference>
<reference key="1">
    <citation type="journal article" date="2004" name="Syst. Biol.">
        <title>A molecular supermatrix of the rabbits and hares (Leporidae) allows for the identification of five intercontinental exchanges during the Miocene.</title>
        <authorList>
            <person name="Matthee C.A."/>
            <person name="van Vuuren B.J."/>
            <person name="Bell D."/>
            <person name="Robinson T.J."/>
        </authorList>
    </citation>
    <scope>NUCLEOTIDE SEQUENCE [GENOMIC DNA]</scope>
</reference>
<keyword id="KW-0249">Electron transport</keyword>
<keyword id="KW-0349">Heme</keyword>
<keyword id="KW-0408">Iron</keyword>
<keyword id="KW-0472">Membrane</keyword>
<keyword id="KW-0479">Metal-binding</keyword>
<keyword id="KW-0496">Mitochondrion</keyword>
<keyword id="KW-0999">Mitochondrion inner membrane</keyword>
<keyword id="KW-0679">Respiratory chain</keyword>
<keyword id="KW-0812">Transmembrane</keyword>
<keyword id="KW-1133">Transmembrane helix</keyword>
<keyword id="KW-0813">Transport</keyword>
<keyword id="KW-0830">Ubiquinone</keyword>
<protein>
    <recommendedName>
        <fullName>Cytochrome b</fullName>
    </recommendedName>
    <alternativeName>
        <fullName>Complex III subunit 3</fullName>
    </alternativeName>
    <alternativeName>
        <fullName>Complex III subunit III</fullName>
    </alternativeName>
    <alternativeName>
        <fullName>Cytochrome b-c1 complex subunit 3</fullName>
    </alternativeName>
    <alternativeName>
        <fullName>Ubiquinol-cytochrome-c reductase complex cytochrome b subunit</fullName>
    </alternativeName>
</protein>
<feature type="chain" id="PRO_0000060690" description="Cytochrome b">
    <location>
        <begin position="1"/>
        <end position="379"/>
    </location>
</feature>
<feature type="transmembrane region" description="Helical" evidence="2">
    <location>
        <begin position="33"/>
        <end position="53"/>
    </location>
</feature>
<feature type="transmembrane region" description="Helical" evidence="2">
    <location>
        <begin position="77"/>
        <end position="98"/>
    </location>
</feature>
<feature type="transmembrane region" description="Helical" evidence="2">
    <location>
        <begin position="113"/>
        <end position="133"/>
    </location>
</feature>
<feature type="transmembrane region" description="Helical" evidence="2">
    <location>
        <begin position="178"/>
        <end position="198"/>
    </location>
</feature>
<feature type="transmembrane region" description="Helical" evidence="2">
    <location>
        <begin position="226"/>
        <end position="246"/>
    </location>
</feature>
<feature type="transmembrane region" description="Helical" evidence="2">
    <location>
        <begin position="288"/>
        <end position="308"/>
    </location>
</feature>
<feature type="transmembrane region" description="Helical" evidence="2">
    <location>
        <begin position="320"/>
        <end position="340"/>
    </location>
</feature>
<feature type="transmembrane region" description="Helical" evidence="2">
    <location>
        <begin position="347"/>
        <end position="367"/>
    </location>
</feature>
<feature type="binding site" description="axial binding residue" evidence="2">
    <location>
        <position position="83"/>
    </location>
    <ligand>
        <name>heme b</name>
        <dbReference type="ChEBI" id="CHEBI:60344"/>
        <label>b562</label>
    </ligand>
    <ligandPart>
        <name>Fe</name>
        <dbReference type="ChEBI" id="CHEBI:18248"/>
    </ligandPart>
</feature>
<feature type="binding site" description="axial binding residue" evidence="2">
    <location>
        <position position="97"/>
    </location>
    <ligand>
        <name>heme b</name>
        <dbReference type="ChEBI" id="CHEBI:60344"/>
        <label>b566</label>
    </ligand>
    <ligandPart>
        <name>Fe</name>
        <dbReference type="ChEBI" id="CHEBI:18248"/>
    </ligandPart>
</feature>
<feature type="binding site" description="axial binding residue" evidence="2">
    <location>
        <position position="182"/>
    </location>
    <ligand>
        <name>heme b</name>
        <dbReference type="ChEBI" id="CHEBI:60344"/>
        <label>b562</label>
    </ligand>
    <ligandPart>
        <name>Fe</name>
        <dbReference type="ChEBI" id="CHEBI:18248"/>
    </ligandPart>
</feature>
<feature type="binding site" description="axial binding residue" evidence="2">
    <location>
        <position position="196"/>
    </location>
    <ligand>
        <name>heme b</name>
        <dbReference type="ChEBI" id="CHEBI:60344"/>
        <label>b566</label>
    </ligand>
    <ligandPart>
        <name>Fe</name>
        <dbReference type="ChEBI" id="CHEBI:18248"/>
    </ligandPart>
</feature>
<feature type="binding site" evidence="2">
    <location>
        <position position="201"/>
    </location>
    <ligand>
        <name>a ubiquinone</name>
        <dbReference type="ChEBI" id="CHEBI:16389"/>
    </ligand>
</feature>
<organism>
    <name type="scientific">Brachylagus idahoensis</name>
    <name type="common">Pygmy rabbit</name>
    <dbReference type="NCBI Taxonomy" id="48083"/>
    <lineage>
        <taxon>Eukaryota</taxon>
        <taxon>Metazoa</taxon>
        <taxon>Chordata</taxon>
        <taxon>Craniata</taxon>
        <taxon>Vertebrata</taxon>
        <taxon>Euteleostomi</taxon>
        <taxon>Mammalia</taxon>
        <taxon>Eutheria</taxon>
        <taxon>Euarchontoglires</taxon>
        <taxon>Glires</taxon>
        <taxon>Lagomorpha</taxon>
        <taxon>Leporidae</taxon>
        <taxon>Brachylagus</taxon>
    </lineage>
</organism>
<name>CYB_BRAID</name>
<geneLocation type="mitochondrion"/>
<sequence>MTNIRKTHPLLKMVNHSLIDLPAPSNISAWWNFGSLLGLCLIIQILTGLFLAMHYTSDTLTAFSSVTHICRDVNYGWLIRYLHANGASMFFVCLYMHVGRGIYYGSYTYLETWNIGIILLFAVMATAFMGYVLPWGQMSFWGATVITNLLSAIPYIGTTLVEWIWGGFSVDKATLTRFFAFHFILPFIIAALVMIHLLFLHETGSNNPSGIPSDSDKIPFHPYYTIKDILGFLLLTLLLLLLVLFSPDLLGDPDNYTPANPLNTPPHIKPEWYFLFAYAILRSIPNKLGGVLALVMSILILAIFPLLHISKQRSMMFRPISQVLFWILVADLLTLTWIGGQPVEHPFITIGQVASILYFSIILILLPLASLVENKILKW</sequence>
<gene>
    <name type="primary">MT-CYB</name>
    <name type="synonym">COB</name>
    <name type="synonym">CYTB</name>
    <name type="synonym">MTCYB</name>
</gene>